<keyword id="KW-1003">Cell membrane</keyword>
<keyword id="KW-0472">Membrane</keyword>
<keyword id="KW-1185">Reference proteome</keyword>
<keyword id="KW-0812">Transmembrane</keyword>
<keyword id="KW-1133">Transmembrane helix</keyword>
<proteinExistence type="inferred from homology"/>
<gene>
    <name type="ordered locus">slr1627</name>
</gene>
<evidence type="ECO:0000255" key="1"/>
<evidence type="ECO:0000305" key="2"/>
<accession>P74343</accession>
<name>Y1627_SYNY3</name>
<feature type="chain" id="PRO_0000094746" description="Uncharacterized membrane protein slr1627">
    <location>
        <begin position="1"/>
        <end position="206"/>
    </location>
</feature>
<feature type="transmembrane region" description="Helical" evidence="1">
    <location>
        <begin position="9"/>
        <end position="29"/>
    </location>
</feature>
<feature type="transmembrane region" description="Helical" evidence="1">
    <location>
        <begin position="47"/>
        <end position="67"/>
    </location>
</feature>
<feature type="transmembrane region" description="Helical" evidence="1">
    <location>
        <begin position="74"/>
        <end position="94"/>
    </location>
</feature>
<feature type="transmembrane region" description="Helical" evidence="1">
    <location>
        <begin position="150"/>
        <end position="170"/>
    </location>
</feature>
<sequence length="206" mass="22041">MLTMGWSNILSLFGAMLILAALPSLSVLTVSSKSASGGFIHGLFAALGVVLGDIIFILIALWGLAFLRGAMGDFFVILKYISGIYLSWLGINTIRAKVNNQSLAKVDVKSLSSSFSAGLLITLADQKAVLFYLGFLPTFVDVNNIAYLDIAVIILTAILTVGGVKIFYAFLAHRSGLLISRQNKRIMNYLAGALMISVGVFLLISS</sequence>
<protein>
    <recommendedName>
        <fullName>Uncharacterized membrane protein slr1627</fullName>
    </recommendedName>
</protein>
<dbReference type="EMBL" id="BA000022">
    <property type="protein sequence ID" value="BAA18437.1"/>
    <property type="molecule type" value="Genomic_DNA"/>
</dbReference>
<dbReference type="PIR" id="S76178">
    <property type="entry name" value="S76178"/>
</dbReference>
<dbReference type="FunCoup" id="P74343">
    <property type="interactions" value="26"/>
</dbReference>
<dbReference type="STRING" id="1148.gene:10499313"/>
<dbReference type="PaxDb" id="1148-1653524"/>
<dbReference type="EnsemblBacteria" id="BAA18437">
    <property type="protein sequence ID" value="BAA18437"/>
    <property type="gene ID" value="BAA18437"/>
</dbReference>
<dbReference type="KEGG" id="syn:slr1627"/>
<dbReference type="eggNOG" id="COG1280">
    <property type="taxonomic scope" value="Bacteria"/>
</dbReference>
<dbReference type="InParanoid" id="P74343"/>
<dbReference type="PhylomeDB" id="P74343"/>
<dbReference type="Proteomes" id="UP000001425">
    <property type="component" value="Chromosome"/>
</dbReference>
<dbReference type="GO" id="GO:0005886">
    <property type="term" value="C:plasma membrane"/>
    <property type="evidence" value="ECO:0000318"/>
    <property type="project" value="GO_Central"/>
</dbReference>
<dbReference type="GO" id="GO:0015171">
    <property type="term" value="F:amino acid transmembrane transporter activity"/>
    <property type="evidence" value="ECO:0000318"/>
    <property type="project" value="GO_Central"/>
</dbReference>
<dbReference type="GO" id="GO:0006865">
    <property type="term" value="P:amino acid transport"/>
    <property type="evidence" value="ECO:0000318"/>
    <property type="project" value="GO_Central"/>
</dbReference>
<dbReference type="InterPro" id="IPR001123">
    <property type="entry name" value="LeuE-type"/>
</dbReference>
<dbReference type="PANTHER" id="PTHR30086">
    <property type="entry name" value="ARGININE EXPORTER PROTEIN ARGO"/>
    <property type="match status" value="1"/>
</dbReference>
<dbReference type="PANTHER" id="PTHR30086:SF20">
    <property type="entry name" value="ARGININE EXPORTER PROTEIN ARGO-RELATED"/>
    <property type="match status" value="1"/>
</dbReference>
<dbReference type="Pfam" id="PF01810">
    <property type="entry name" value="LysE"/>
    <property type="match status" value="1"/>
</dbReference>
<reference key="1">
    <citation type="journal article" date="1996" name="DNA Res.">
        <title>Sequence analysis of the genome of the unicellular cyanobacterium Synechocystis sp. strain PCC6803. II. Sequence determination of the entire genome and assignment of potential protein-coding regions.</title>
        <authorList>
            <person name="Kaneko T."/>
            <person name="Sato S."/>
            <person name="Kotani H."/>
            <person name="Tanaka A."/>
            <person name="Asamizu E."/>
            <person name="Nakamura Y."/>
            <person name="Miyajima N."/>
            <person name="Hirosawa M."/>
            <person name="Sugiura M."/>
            <person name="Sasamoto S."/>
            <person name="Kimura T."/>
            <person name="Hosouchi T."/>
            <person name="Matsuno A."/>
            <person name="Muraki A."/>
            <person name="Nakazaki N."/>
            <person name="Naruo K."/>
            <person name="Okumura S."/>
            <person name="Shimpo S."/>
            <person name="Takeuchi C."/>
            <person name="Wada T."/>
            <person name="Watanabe A."/>
            <person name="Yamada M."/>
            <person name="Yasuda M."/>
            <person name="Tabata S."/>
        </authorList>
    </citation>
    <scope>NUCLEOTIDE SEQUENCE [LARGE SCALE GENOMIC DNA]</scope>
    <source>
        <strain>ATCC 27184 / PCC 6803 / Kazusa</strain>
    </source>
</reference>
<comment type="subcellular location">
    <subcellularLocation>
        <location evidence="2">Cell membrane</location>
        <topology evidence="2">Multi-pass membrane protein</topology>
    </subcellularLocation>
</comment>
<comment type="similarity">
    <text evidence="2">Belongs to the Rht family.</text>
</comment>
<organism>
    <name type="scientific">Synechocystis sp. (strain ATCC 27184 / PCC 6803 / Kazusa)</name>
    <dbReference type="NCBI Taxonomy" id="1111708"/>
    <lineage>
        <taxon>Bacteria</taxon>
        <taxon>Bacillati</taxon>
        <taxon>Cyanobacteriota</taxon>
        <taxon>Cyanophyceae</taxon>
        <taxon>Synechococcales</taxon>
        <taxon>Merismopediaceae</taxon>
        <taxon>Synechocystis</taxon>
    </lineage>
</organism>